<gene>
    <name evidence="1" type="primary">upp</name>
    <name type="ordered locus">SAOUHSC_02353</name>
</gene>
<evidence type="ECO:0000255" key="1">
    <source>
        <dbReference type="HAMAP-Rule" id="MF_01218"/>
    </source>
</evidence>
<proteinExistence type="inferred from homology"/>
<dbReference type="EC" id="2.4.2.9" evidence="1"/>
<dbReference type="EMBL" id="CP000253">
    <property type="protein sequence ID" value="ABD31384.1"/>
    <property type="molecule type" value="Genomic_DNA"/>
</dbReference>
<dbReference type="RefSeq" id="WP_000048712.1">
    <property type="nucleotide sequence ID" value="NZ_LS483365.1"/>
</dbReference>
<dbReference type="RefSeq" id="YP_500829.1">
    <property type="nucleotide sequence ID" value="NC_007795.1"/>
</dbReference>
<dbReference type="SMR" id="Q2FWE6"/>
<dbReference type="STRING" id="93061.SAOUHSC_02353"/>
<dbReference type="PaxDb" id="1280-SAXN108_2357"/>
<dbReference type="GeneID" id="3919396"/>
<dbReference type="KEGG" id="sao:SAOUHSC_02353"/>
<dbReference type="PATRIC" id="fig|93061.5.peg.2130"/>
<dbReference type="eggNOG" id="COG0035">
    <property type="taxonomic scope" value="Bacteria"/>
</dbReference>
<dbReference type="HOGENOM" id="CLU_067096_2_2_9"/>
<dbReference type="OrthoDB" id="9781675at2"/>
<dbReference type="UniPathway" id="UPA00574">
    <property type="reaction ID" value="UER00636"/>
</dbReference>
<dbReference type="PRO" id="PR:Q2FWE6"/>
<dbReference type="Proteomes" id="UP000008816">
    <property type="component" value="Chromosome"/>
</dbReference>
<dbReference type="GO" id="GO:0005737">
    <property type="term" value="C:cytoplasm"/>
    <property type="evidence" value="ECO:0000318"/>
    <property type="project" value="GO_Central"/>
</dbReference>
<dbReference type="GO" id="GO:0005525">
    <property type="term" value="F:GTP binding"/>
    <property type="evidence" value="ECO:0007669"/>
    <property type="project" value="UniProtKB-KW"/>
</dbReference>
<dbReference type="GO" id="GO:0000287">
    <property type="term" value="F:magnesium ion binding"/>
    <property type="evidence" value="ECO:0007669"/>
    <property type="project" value="UniProtKB-UniRule"/>
</dbReference>
<dbReference type="GO" id="GO:0004845">
    <property type="term" value="F:uracil phosphoribosyltransferase activity"/>
    <property type="evidence" value="ECO:0000318"/>
    <property type="project" value="GO_Central"/>
</dbReference>
<dbReference type="GO" id="GO:0044206">
    <property type="term" value="P:UMP salvage"/>
    <property type="evidence" value="ECO:0007669"/>
    <property type="project" value="UniProtKB-UniRule"/>
</dbReference>
<dbReference type="GO" id="GO:0006223">
    <property type="term" value="P:uracil salvage"/>
    <property type="evidence" value="ECO:0007669"/>
    <property type="project" value="InterPro"/>
</dbReference>
<dbReference type="CDD" id="cd06223">
    <property type="entry name" value="PRTases_typeI"/>
    <property type="match status" value="1"/>
</dbReference>
<dbReference type="FunFam" id="3.40.50.2020:FF:000003">
    <property type="entry name" value="Uracil phosphoribosyltransferase"/>
    <property type="match status" value="1"/>
</dbReference>
<dbReference type="Gene3D" id="3.40.50.2020">
    <property type="match status" value="1"/>
</dbReference>
<dbReference type="HAMAP" id="MF_01218_B">
    <property type="entry name" value="Upp_B"/>
    <property type="match status" value="1"/>
</dbReference>
<dbReference type="InterPro" id="IPR000836">
    <property type="entry name" value="PRibTrfase_dom"/>
</dbReference>
<dbReference type="InterPro" id="IPR029057">
    <property type="entry name" value="PRTase-like"/>
</dbReference>
<dbReference type="InterPro" id="IPR034332">
    <property type="entry name" value="Upp_B"/>
</dbReference>
<dbReference type="InterPro" id="IPR050054">
    <property type="entry name" value="UPRTase/APRTase"/>
</dbReference>
<dbReference type="InterPro" id="IPR005765">
    <property type="entry name" value="Ura_phspho_trans"/>
</dbReference>
<dbReference type="NCBIfam" id="NF001097">
    <property type="entry name" value="PRK00129.1"/>
    <property type="match status" value="1"/>
</dbReference>
<dbReference type="NCBIfam" id="TIGR01091">
    <property type="entry name" value="upp"/>
    <property type="match status" value="1"/>
</dbReference>
<dbReference type="PANTHER" id="PTHR32315">
    <property type="entry name" value="ADENINE PHOSPHORIBOSYLTRANSFERASE"/>
    <property type="match status" value="1"/>
</dbReference>
<dbReference type="PANTHER" id="PTHR32315:SF4">
    <property type="entry name" value="URACIL PHOSPHORIBOSYLTRANSFERASE, CHLOROPLASTIC"/>
    <property type="match status" value="1"/>
</dbReference>
<dbReference type="Pfam" id="PF14681">
    <property type="entry name" value="UPRTase"/>
    <property type="match status" value="1"/>
</dbReference>
<dbReference type="SUPFAM" id="SSF53271">
    <property type="entry name" value="PRTase-like"/>
    <property type="match status" value="1"/>
</dbReference>
<feature type="chain" id="PRO_1000053792" description="Uracil phosphoribosyltransferase">
    <location>
        <begin position="1"/>
        <end position="209"/>
    </location>
</feature>
<feature type="binding site" evidence="1">
    <location>
        <position position="79"/>
    </location>
    <ligand>
        <name>5-phospho-alpha-D-ribose 1-diphosphate</name>
        <dbReference type="ChEBI" id="CHEBI:58017"/>
    </ligand>
</feature>
<feature type="binding site" evidence="1">
    <location>
        <position position="104"/>
    </location>
    <ligand>
        <name>5-phospho-alpha-D-ribose 1-diphosphate</name>
        <dbReference type="ChEBI" id="CHEBI:58017"/>
    </ligand>
</feature>
<feature type="binding site" evidence="1">
    <location>
        <begin position="131"/>
        <end position="139"/>
    </location>
    <ligand>
        <name>5-phospho-alpha-D-ribose 1-diphosphate</name>
        <dbReference type="ChEBI" id="CHEBI:58017"/>
    </ligand>
</feature>
<feature type="binding site" evidence="1">
    <location>
        <position position="194"/>
    </location>
    <ligand>
        <name>uracil</name>
        <dbReference type="ChEBI" id="CHEBI:17568"/>
    </ligand>
</feature>
<feature type="binding site" evidence="1">
    <location>
        <begin position="199"/>
        <end position="201"/>
    </location>
    <ligand>
        <name>uracil</name>
        <dbReference type="ChEBI" id="CHEBI:17568"/>
    </ligand>
</feature>
<feature type="binding site" evidence="1">
    <location>
        <position position="200"/>
    </location>
    <ligand>
        <name>5-phospho-alpha-D-ribose 1-diphosphate</name>
        <dbReference type="ChEBI" id="CHEBI:58017"/>
    </ligand>
</feature>
<name>UPP_STAA8</name>
<comment type="function">
    <text evidence="1">Catalyzes the conversion of uracil and 5-phospho-alpha-D-ribose 1-diphosphate (PRPP) to UMP and diphosphate.</text>
</comment>
<comment type="catalytic activity">
    <reaction evidence="1">
        <text>UMP + diphosphate = 5-phospho-alpha-D-ribose 1-diphosphate + uracil</text>
        <dbReference type="Rhea" id="RHEA:13017"/>
        <dbReference type="ChEBI" id="CHEBI:17568"/>
        <dbReference type="ChEBI" id="CHEBI:33019"/>
        <dbReference type="ChEBI" id="CHEBI:57865"/>
        <dbReference type="ChEBI" id="CHEBI:58017"/>
        <dbReference type="EC" id="2.4.2.9"/>
    </reaction>
</comment>
<comment type="cofactor">
    <cofactor evidence="1">
        <name>Mg(2+)</name>
        <dbReference type="ChEBI" id="CHEBI:18420"/>
    </cofactor>
    <text evidence="1">Binds 1 Mg(2+) ion per subunit. The magnesium is bound as Mg-PRPP.</text>
</comment>
<comment type="activity regulation">
    <text evidence="1">Allosterically activated by GTP.</text>
</comment>
<comment type="pathway">
    <text evidence="1">Pyrimidine metabolism; UMP biosynthesis via salvage pathway; UMP from uracil: step 1/1.</text>
</comment>
<comment type="similarity">
    <text evidence="1">Belongs to the UPRTase family.</text>
</comment>
<keyword id="KW-0021">Allosteric enzyme</keyword>
<keyword id="KW-0328">Glycosyltransferase</keyword>
<keyword id="KW-0342">GTP-binding</keyword>
<keyword id="KW-0460">Magnesium</keyword>
<keyword id="KW-0547">Nucleotide-binding</keyword>
<keyword id="KW-1185">Reference proteome</keyword>
<keyword id="KW-0808">Transferase</keyword>
<accession>Q2FWE6</accession>
<organism>
    <name type="scientific">Staphylococcus aureus (strain NCTC 8325 / PS 47)</name>
    <dbReference type="NCBI Taxonomy" id="93061"/>
    <lineage>
        <taxon>Bacteria</taxon>
        <taxon>Bacillati</taxon>
        <taxon>Bacillota</taxon>
        <taxon>Bacilli</taxon>
        <taxon>Bacillales</taxon>
        <taxon>Staphylococcaceae</taxon>
        <taxon>Staphylococcus</taxon>
    </lineage>
</organism>
<reference key="1">
    <citation type="book" date="2006" name="Gram positive pathogens, 2nd edition">
        <title>The Staphylococcus aureus NCTC 8325 genome.</title>
        <editorList>
            <person name="Fischetti V."/>
            <person name="Novick R."/>
            <person name="Ferretti J."/>
            <person name="Portnoy D."/>
            <person name="Rood J."/>
        </editorList>
        <authorList>
            <person name="Gillaspy A.F."/>
            <person name="Worrell V."/>
            <person name="Orvis J."/>
            <person name="Roe B.A."/>
            <person name="Dyer D.W."/>
            <person name="Iandolo J.J."/>
        </authorList>
    </citation>
    <scope>NUCLEOTIDE SEQUENCE [LARGE SCALE GENOMIC DNA]</scope>
    <source>
        <strain>NCTC 8325 / PS 47</strain>
    </source>
</reference>
<protein>
    <recommendedName>
        <fullName evidence="1">Uracil phosphoribosyltransferase</fullName>
        <ecNumber evidence="1">2.4.2.9</ecNumber>
    </recommendedName>
    <alternativeName>
        <fullName evidence="1">UMP pyrophosphorylase</fullName>
    </alternativeName>
    <alternativeName>
        <fullName evidence="1">UPRTase</fullName>
    </alternativeName>
</protein>
<sequence length="209" mass="23050">MSKVHVFDHPLIQHKLSYIRDVNTGTKEFRELVDEVGMLMAYEVTRDLELQDVDIETPVTKMTAKRLAGKKLAIVPILRAGLGMTDGILSLVPAARVGHIGLYRDPETLKAVEYFAKLPQDITERQIIVVDPMLATGASAIEAITSLKKRGAKNIRFMCLIAAPEGVEKMHEAHPDVDIYIAALDEKLNDKAYITPGLGDAGDRLFGTK</sequence>